<organism>
    <name type="scientific">Lactobacillus johnsonii (strain CNCM I-12250 / La1 / NCC 533)</name>
    <dbReference type="NCBI Taxonomy" id="257314"/>
    <lineage>
        <taxon>Bacteria</taxon>
        <taxon>Bacillati</taxon>
        <taxon>Bacillota</taxon>
        <taxon>Bacilli</taxon>
        <taxon>Lactobacillales</taxon>
        <taxon>Lactobacillaceae</taxon>
        <taxon>Lactobacillus</taxon>
    </lineage>
</organism>
<proteinExistence type="inferred from homology"/>
<gene>
    <name evidence="1" type="primary">plsY1</name>
    <name type="ordered locus">LJ_0173</name>
</gene>
<protein>
    <recommendedName>
        <fullName evidence="1">Glycerol-3-phosphate acyltransferase 1</fullName>
    </recommendedName>
    <alternativeName>
        <fullName evidence="1">Acyl-PO4 G3P acyltransferase 1</fullName>
    </alternativeName>
    <alternativeName>
        <fullName evidence="1">Acyl-phosphate--glycerol-3-phosphate acyltransferase 1</fullName>
    </alternativeName>
    <alternativeName>
        <fullName evidence="1">G3P acyltransferase 1</fullName>
        <shortName evidence="1">GPAT 1</shortName>
        <ecNumber evidence="1">2.3.1.275</ecNumber>
    </alternativeName>
    <alternativeName>
        <fullName evidence="1">Lysophosphatidic acid synthase 1</fullName>
        <shortName evidence="1">LPA synthase 1</shortName>
    </alternativeName>
</protein>
<comment type="function">
    <text evidence="1">Catalyzes the transfer of an acyl group from acyl-phosphate (acyl-PO(4)) to glycerol-3-phosphate (G3P) to form lysophosphatidic acid (LPA). This enzyme utilizes acyl-phosphate as fatty acyl donor, but not acyl-CoA or acyl-ACP.</text>
</comment>
<comment type="catalytic activity">
    <reaction evidence="1">
        <text>an acyl phosphate + sn-glycerol 3-phosphate = a 1-acyl-sn-glycero-3-phosphate + phosphate</text>
        <dbReference type="Rhea" id="RHEA:34075"/>
        <dbReference type="ChEBI" id="CHEBI:43474"/>
        <dbReference type="ChEBI" id="CHEBI:57597"/>
        <dbReference type="ChEBI" id="CHEBI:57970"/>
        <dbReference type="ChEBI" id="CHEBI:59918"/>
        <dbReference type="EC" id="2.3.1.275"/>
    </reaction>
</comment>
<comment type="pathway">
    <text evidence="1">Lipid metabolism; phospholipid metabolism.</text>
</comment>
<comment type="subunit">
    <text evidence="1">Probably interacts with PlsX.</text>
</comment>
<comment type="subcellular location">
    <subcellularLocation>
        <location evidence="1">Cell membrane</location>
        <topology evidence="1">Multi-pass membrane protein</topology>
    </subcellularLocation>
</comment>
<comment type="similarity">
    <text evidence="1">Belongs to the PlsY family.</text>
</comment>
<feature type="chain" id="PRO_0000188386" description="Glycerol-3-phosphate acyltransferase 1">
    <location>
        <begin position="1"/>
        <end position="206"/>
    </location>
</feature>
<feature type="transmembrane region" description="Helical" evidence="1">
    <location>
        <begin position="7"/>
        <end position="27"/>
    </location>
</feature>
<feature type="transmembrane region" description="Helical" evidence="1">
    <location>
        <begin position="54"/>
        <end position="74"/>
    </location>
</feature>
<feature type="transmembrane region" description="Helical" evidence="1">
    <location>
        <begin position="81"/>
        <end position="101"/>
    </location>
</feature>
<feature type="transmembrane region" description="Helical" evidence="1">
    <location>
        <begin position="114"/>
        <end position="134"/>
    </location>
</feature>
<feature type="transmembrane region" description="Helical" evidence="1">
    <location>
        <begin position="155"/>
        <end position="175"/>
    </location>
</feature>
<evidence type="ECO:0000255" key="1">
    <source>
        <dbReference type="HAMAP-Rule" id="MF_01043"/>
    </source>
</evidence>
<keyword id="KW-1003">Cell membrane</keyword>
<keyword id="KW-0444">Lipid biosynthesis</keyword>
<keyword id="KW-0443">Lipid metabolism</keyword>
<keyword id="KW-0472">Membrane</keyword>
<keyword id="KW-0594">Phospholipid biosynthesis</keyword>
<keyword id="KW-1208">Phospholipid metabolism</keyword>
<keyword id="KW-0808">Transferase</keyword>
<keyword id="KW-0812">Transmembrane</keyword>
<keyword id="KW-1133">Transmembrane helix</keyword>
<sequence length="206" mass="23021">MDEFVSLVIGYFLGNILFAMIVTKIFLHKDPTKYGSGNPGTANVGAVFGKKWGILTCIGDLAKTLAALLIVYFIYHGNRLDLSFAGLGVVLGHSFPFWNHFKGGKGVAVTALWIVFFDWRAGLIALLIGLFLVIIMKNLTIPPLVYMLGFSIFTWINFGWEQGLIFLIATLIMIFQFRKDIVDFFTGKGKRVDVLVTIKKKLGIYK</sequence>
<reference key="1">
    <citation type="journal article" date="2004" name="Proc. Natl. Acad. Sci. U.S.A.">
        <title>The genome sequence of the probiotic intestinal bacterium Lactobacillus johnsonii NCC 533.</title>
        <authorList>
            <person name="Pridmore R.D."/>
            <person name="Berger B."/>
            <person name="Desiere F."/>
            <person name="Vilanova D."/>
            <person name="Barretto C."/>
            <person name="Pittet A.-C."/>
            <person name="Zwahlen M.-C."/>
            <person name="Rouvet M."/>
            <person name="Altermann E."/>
            <person name="Barrangou R."/>
            <person name="Mollet B."/>
            <person name="Mercenier A."/>
            <person name="Klaenhammer T."/>
            <person name="Arigoni F."/>
            <person name="Schell M.A."/>
        </authorList>
    </citation>
    <scope>NUCLEOTIDE SEQUENCE [LARGE SCALE GENOMIC DNA]</scope>
    <source>
        <strain>CNCM I-1225 / La1 / NCC 533</strain>
    </source>
</reference>
<name>PLSY1_LACJO</name>
<dbReference type="EC" id="2.3.1.275" evidence="1"/>
<dbReference type="EMBL" id="AE017198">
    <property type="protein sequence ID" value="AAS08155.1"/>
    <property type="molecule type" value="Genomic_DNA"/>
</dbReference>
<dbReference type="RefSeq" id="WP_011161383.1">
    <property type="nucleotide sequence ID" value="NC_005362.1"/>
</dbReference>
<dbReference type="SMR" id="P60927"/>
<dbReference type="KEGG" id="ljo:LJ_0173"/>
<dbReference type="eggNOG" id="COG0344">
    <property type="taxonomic scope" value="Bacteria"/>
</dbReference>
<dbReference type="HOGENOM" id="CLU_081254_5_0_9"/>
<dbReference type="UniPathway" id="UPA00085"/>
<dbReference type="Proteomes" id="UP000000581">
    <property type="component" value="Chromosome"/>
</dbReference>
<dbReference type="GO" id="GO:0005886">
    <property type="term" value="C:plasma membrane"/>
    <property type="evidence" value="ECO:0007669"/>
    <property type="project" value="UniProtKB-SubCell"/>
</dbReference>
<dbReference type="GO" id="GO:0043772">
    <property type="term" value="F:acyl-phosphate glycerol-3-phosphate acyltransferase activity"/>
    <property type="evidence" value="ECO:0007669"/>
    <property type="project" value="UniProtKB-UniRule"/>
</dbReference>
<dbReference type="GO" id="GO:0008654">
    <property type="term" value="P:phospholipid biosynthetic process"/>
    <property type="evidence" value="ECO:0007669"/>
    <property type="project" value="UniProtKB-UniRule"/>
</dbReference>
<dbReference type="HAMAP" id="MF_01043">
    <property type="entry name" value="PlsY"/>
    <property type="match status" value="1"/>
</dbReference>
<dbReference type="InterPro" id="IPR003811">
    <property type="entry name" value="G3P_acylTferase_PlsY"/>
</dbReference>
<dbReference type="NCBIfam" id="NF010987">
    <property type="entry name" value="PRK14411.1"/>
    <property type="match status" value="1"/>
</dbReference>
<dbReference type="PANTHER" id="PTHR30309:SF0">
    <property type="entry name" value="GLYCEROL-3-PHOSPHATE ACYLTRANSFERASE-RELATED"/>
    <property type="match status" value="1"/>
</dbReference>
<dbReference type="PANTHER" id="PTHR30309">
    <property type="entry name" value="INNER MEMBRANE PROTEIN YGIH"/>
    <property type="match status" value="1"/>
</dbReference>
<dbReference type="Pfam" id="PF02660">
    <property type="entry name" value="G3P_acyltransf"/>
    <property type="match status" value="1"/>
</dbReference>
<dbReference type="SMART" id="SM01207">
    <property type="entry name" value="G3P_acyltransf"/>
    <property type="match status" value="1"/>
</dbReference>
<accession>P60927</accession>